<proteinExistence type="inferred from homology"/>
<feature type="chain" id="PRO_0000182122" description="UDP-N-acetylmuramate--L-alanine ligase">
    <location>
        <begin position="1"/>
        <end position="469"/>
    </location>
</feature>
<feature type="binding site" evidence="1">
    <location>
        <begin position="113"/>
        <end position="119"/>
    </location>
    <ligand>
        <name>ATP</name>
        <dbReference type="ChEBI" id="CHEBI:30616"/>
    </ligand>
</feature>
<name>MURC_NEIMB</name>
<organism>
    <name type="scientific">Neisseria meningitidis serogroup B (strain ATCC BAA-335 / MC58)</name>
    <dbReference type="NCBI Taxonomy" id="122586"/>
    <lineage>
        <taxon>Bacteria</taxon>
        <taxon>Pseudomonadati</taxon>
        <taxon>Pseudomonadota</taxon>
        <taxon>Betaproteobacteria</taxon>
        <taxon>Neisseriales</taxon>
        <taxon>Neisseriaceae</taxon>
        <taxon>Neisseria</taxon>
    </lineage>
</organism>
<reference key="1">
    <citation type="journal article" date="2000" name="Science">
        <title>Complete genome sequence of Neisseria meningitidis serogroup B strain MC58.</title>
        <authorList>
            <person name="Tettelin H."/>
            <person name="Saunders N.J."/>
            <person name="Heidelberg J.F."/>
            <person name="Jeffries A.C."/>
            <person name="Nelson K.E."/>
            <person name="Eisen J.A."/>
            <person name="Ketchum K.A."/>
            <person name="Hood D.W."/>
            <person name="Peden J.F."/>
            <person name="Dodson R.J."/>
            <person name="Nelson W.C."/>
            <person name="Gwinn M.L."/>
            <person name="DeBoy R.T."/>
            <person name="Peterson J.D."/>
            <person name="Hickey E.K."/>
            <person name="Haft D.H."/>
            <person name="Salzberg S.L."/>
            <person name="White O."/>
            <person name="Fleischmann R.D."/>
            <person name="Dougherty B.A."/>
            <person name="Mason T.M."/>
            <person name="Ciecko A."/>
            <person name="Parksey D.S."/>
            <person name="Blair E."/>
            <person name="Cittone H."/>
            <person name="Clark E.B."/>
            <person name="Cotton M.D."/>
            <person name="Utterback T.R."/>
            <person name="Khouri H.M."/>
            <person name="Qin H."/>
            <person name="Vamathevan J.J."/>
            <person name="Gill J."/>
            <person name="Scarlato V."/>
            <person name="Masignani V."/>
            <person name="Pizza M."/>
            <person name="Grandi G."/>
            <person name="Sun L."/>
            <person name="Smith H.O."/>
            <person name="Fraser C.M."/>
            <person name="Moxon E.R."/>
            <person name="Rappuoli R."/>
            <person name="Venter J.C."/>
        </authorList>
    </citation>
    <scope>NUCLEOTIDE SEQUENCE [LARGE SCALE GENOMIC DNA]</scope>
    <source>
        <strain>ATCC BAA-335 / MC58</strain>
    </source>
</reference>
<sequence length="469" mass="50279">MMKNRVTNIHFVGIGGVGMSGIAEVLHNLGFKVSGSDQARNAATEHLGSLGIQVYPGHTAEHVNGADVVVTSTAVKKENPEVVAALEQQIPVIPRALMLAELMRFRDGIAIAGTHGKTTTTSLTASILGAAGLDPTFVIGGKLNAAGTNARLGKGEYIVAEADESDASFLHLTPIMSVVTNIDEDHMDTYGHSVEKLHQAFIDFIHRMPFYGKAFLCIDSEHVRAILPKVSKPYATYGLDDTADIYATDIENVGAQMKFTVHVQMKGHEQGSFEVVLNMPGRHNVLNALAAIGVALEVGASVEAIQKGLLGFEGVGRRFQKYGDIKLPNGGTALLVDDYGHHPVEMAATLAAARGAYLEKRLVLAFQPHRYTRTRDLFEDFTKVLNTVDALVLTEVYAAGEEPIAAADSRALARAIRVLGKLEPIYCENVADLPEMLLNVLQDGDIVLNMGAGSINRVPAALLALSKQI</sequence>
<evidence type="ECO:0000255" key="1">
    <source>
        <dbReference type="HAMAP-Rule" id="MF_00046"/>
    </source>
</evidence>
<comment type="function">
    <text evidence="1">Cell wall formation.</text>
</comment>
<comment type="catalytic activity">
    <reaction evidence="1">
        <text>UDP-N-acetyl-alpha-D-muramate + L-alanine + ATP = UDP-N-acetyl-alpha-D-muramoyl-L-alanine + ADP + phosphate + H(+)</text>
        <dbReference type="Rhea" id="RHEA:23372"/>
        <dbReference type="ChEBI" id="CHEBI:15378"/>
        <dbReference type="ChEBI" id="CHEBI:30616"/>
        <dbReference type="ChEBI" id="CHEBI:43474"/>
        <dbReference type="ChEBI" id="CHEBI:57972"/>
        <dbReference type="ChEBI" id="CHEBI:70757"/>
        <dbReference type="ChEBI" id="CHEBI:83898"/>
        <dbReference type="ChEBI" id="CHEBI:456216"/>
        <dbReference type="EC" id="6.3.2.8"/>
    </reaction>
</comment>
<comment type="pathway">
    <text evidence="1">Cell wall biogenesis; peptidoglycan biosynthesis.</text>
</comment>
<comment type="subcellular location">
    <subcellularLocation>
        <location evidence="1">Cytoplasm</location>
    </subcellularLocation>
</comment>
<comment type="similarity">
    <text evidence="1">Belongs to the MurCDEF family.</text>
</comment>
<gene>
    <name evidence="1" type="primary">murC</name>
    <name type="ordered locus">NMB0423</name>
</gene>
<accession>Q9K0Y1</accession>
<protein>
    <recommendedName>
        <fullName evidence="1">UDP-N-acetylmuramate--L-alanine ligase</fullName>
        <ecNumber evidence="1">6.3.2.8</ecNumber>
    </recommendedName>
    <alternativeName>
        <fullName evidence="1">UDP-N-acetylmuramoyl-L-alanine synthetase</fullName>
    </alternativeName>
</protein>
<keyword id="KW-0067">ATP-binding</keyword>
<keyword id="KW-0131">Cell cycle</keyword>
<keyword id="KW-0132">Cell division</keyword>
<keyword id="KW-0133">Cell shape</keyword>
<keyword id="KW-0961">Cell wall biogenesis/degradation</keyword>
<keyword id="KW-0963">Cytoplasm</keyword>
<keyword id="KW-0436">Ligase</keyword>
<keyword id="KW-0547">Nucleotide-binding</keyword>
<keyword id="KW-0573">Peptidoglycan synthesis</keyword>
<keyword id="KW-1185">Reference proteome</keyword>
<dbReference type="EC" id="6.3.2.8" evidence="1"/>
<dbReference type="EMBL" id="AE002098">
    <property type="protein sequence ID" value="AAF40861.1"/>
    <property type="molecule type" value="Genomic_DNA"/>
</dbReference>
<dbReference type="PIR" id="B81201">
    <property type="entry name" value="B81201"/>
</dbReference>
<dbReference type="RefSeq" id="NP_273471.2">
    <property type="nucleotide sequence ID" value="NC_003112.2"/>
</dbReference>
<dbReference type="RefSeq" id="WP_002224928.1">
    <property type="nucleotide sequence ID" value="NC_003112.2"/>
</dbReference>
<dbReference type="SMR" id="Q9K0Y1"/>
<dbReference type="FunCoup" id="Q9K0Y1">
    <property type="interactions" value="291"/>
</dbReference>
<dbReference type="STRING" id="122586.NMB0423"/>
<dbReference type="PaxDb" id="122586-NMB0423"/>
<dbReference type="KEGG" id="nme:NMB0423"/>
<dbReference type="PATRIC" id="fig|122586.8.peg.536"/>
<dbReference type="HOGENOM" id="CLU_028104_2_2_4"/>
<dbReference type="InParanoid" id="Q9K0Y1"/>
<dbReference type="OrthoDB" id="9804126at2"/>
<dbReference type="UniPathway" id="UPA00219"/>
<dbReference type="Proteomes" id="UP000000425">
    <property type="component" value="Chromosome"/>
</dbReference>
<dbReference type="GO" id="GO:0005737">
    <property type="term" value="C:cytoplasm"/>
    <property type="evidence" value="ECO:0007669"/>
    <property type="project" value="UniProtKB-SubCell"/>
</dbReference>
<dbReference type="GO" id="GO:0005524">
    <property type="term" value="F:ATP binding"/>
    <property type="evidence" value="ECO:0007669"/>
    <property type="project" value="UniProtKB-UniRule"/>
</dbReference>
<dbReference type="GO" id="GO:0008763">
    <property type="term" value="F:UDP-N-acetylmuramate-L-alanine ligase activity"/>
    <property type="evidence" value="ECO:0007669"/>
    <property type="project" value="UniProtKB-UniRule"/>
</dbReference>
<dbReference type="GO" id="GO:0051301">
    <property type="term" value="P:cell division"/>
    <property type="evidence" value="ECO:0007669"/>
    <property type="project" value="UniProtKB-KW"/>
</dbReference>
<dbReference type="GO" id="GO:0071555">
    <property type="term" value="P:cell wall organization"/>
    <property type="evidence" value="ECO:0007669"/>
    <property type="project" value="UniProtKB-KW"/>
</dbReference>
<dbReference type="GO" id="GO:0009252">
    <property type="term" value="P:peptidoglycan biosynthetic process"/>
    <property type="evidence" value="ECO:0007669"/>
    <property type="project" value="UniProtKB-UniRule"/>
</dbReference>
<dbReference type="GO" id="GO:0008360">
    <property type="term" value="P:regulation of cell shape"/>
    <property type="evidence" value="ECO:0007669"/>
    <property type="project" value="UniProtKB-KW"/>
</dbReference>
<dbReference type="FunFam" id="3.40.1190.10:FF:000001">
    <property type="entry name" value="UDP-N-acetylmuramate--L-alanine ligase"/>
    <property type="match status" value="1"/>
</dbReference>
<dbReference type="Gene3D" id="3.90.190.20">
    <property type="entry name" value="Mur ligase, C-terminal domain"/>
    <property type="match status" value="1"/>
</dbReference>
<dbReference type="Gene3D" id="3.40.1190.10">
    <property type="entry name" value="Mur-like, catalytic domain"/>
    <property type="match status" value="1"/>
</dbReference>
<dbReference type="Gene3D" id="3.40.50.720">
    <property type="entry name" value="NAD(P)-binding Rossmann-like Domain"/>
    <property type="match status" value="1"/>
</dbReference>
<dbReference type="HAMAP" id="MF_00046">
    <property type="entry name" value="MurC"/>
    <property type="match status" value="1"/>
</dbReference>
<dbReference type="InterPro" id="IPR036565">
    <property type="entry name" value="Mur-like_cat_sf"/>
</dbReference>
<dbReference type="InterPro" id="IPR004101">
    <property type="entry name" value="Mur_ligase_C"/>
</dbReference>
<dbReference type="InterPro" id="IPR036615">
    <property type="entry name" value="Mur_ligase_C_dom_sf"/>
</dbReference>
<dbReference type="InterPro" id="IPR013221">
    <property type="entry name" value="Mur_ligase_cen"/>
</dbReference>
<dbReference type="InterPro" id="IPR000713">
    <property type="entry name" value="Mur_ligase_N"/>
</dbReference>
<dbReference type="InterPro" id="IPR050061">
    <property type="entry name" value="MurCDEF_pg_biosynth"/>
</dbReference>
<dbReference type="InterPro" id="IPR005758">
    <property type="entry name" value="UDP-N-AcMur_Ala_ligase_MurC"/>
</dbReference>
<dbReference type="NCBIfam" id="TIGR01082">
    <property type="entry name" value="murC"/>
    <property type="match status" value="1"/>
</dbReference>
<dbReference type="PANTHER" id="PTHR43445:SF3">
    <property type="entry name" value="UDP-N-ACETYLMURAMATE--L-ALANINE LIGASE"/>
    <property type="match status" value="1"/>
</dbReference>
<dbReference type="PANTHER" id="PTHR43445">
    <property type="entry name" value="UDP-N-ACETYLMURAMATE--L-ALANINE LIGASE-RELATED"/>
    <property type="match status" value="1"/>
</dbReference>
<dbReference type="Pfam" id="PF01225">
    <property type="entry name" value="Mur_ligase"/>
    <property type="match status" value="1"/>
</dbReference>
<dbReference type="Pfam" id="PF02875">
    <property type="entry name" value="Mur_ligase_C"/>
    <property type="match status" value="1"/>
</dbReference>
<dbReference type="Pfam" id="PF08245">
    <property type="entry name" value="Mur_ligase_M"/>
    <property type="match status" value="1"/>
</dbReference>
<dbReference type="SUPFAM" id="SSF51984">
    <property type="entry name" value="MurCD N-terminal domain"/>
    <property type="match status" value="1"/>
</dbReference>
<dbReference type="SUPFAM" id="SSF53623">
    <property type="entry name" value="MurD-like peptide ligases, catalytic domain"/>
    <property type="match status" value="1"/>
</dbReference>
<dbReference type="SUPFAM" id="SSF53244">
    <property type="entry name" value="MurD-like peptide ligases, peptide-binding domain"/>
    <property type="match status" value="1"/>
</dbReference>